<accession>A8FCU1</accession>
<evidence type="ECO:0000255" key="1">
    <source>
        <dbReference type="HAMAP-Rule" id="MF_01560"/>
    </source>
</evidence>
<name>Y1375_BACP2</name>
<proteinExistence type="inferred from homology"/>
<organism>
    <name type="scientific">Bacillus pumilus (strain SAFR-032)</name>
    <dbReference type="NCBI Taxonomy" id="315750"/>
    <lineage>
        <taxon>Bacteria</taxon>
        <taxon>Bacillati</taxon>
        <taxon>Bacillota</taxon>
        <taxon>Bacilli</taxon>
        <taxon>Bacillales</taxon>
        <taxon>Bacillaceae</taxon>
        <taxon>Bacillus</taxon>
    </lineage>
</organism>
<sequence>MASEILVDHRQKALALLKLDADKILKLIQVQMDNLTMPQCPLYEEVLDTQMFGLSREIDFAVRLGLVDQHEGKKLLDKLERELSALHDAFTKK</sequence>
<dbReference type="EMBL" id="CP000813">
    <property type="protein sequence ID" value="ABV62058.1"/>
    <property type="molecule type" value="Genomic_DNA"/>
</dbReference>
<dbReference type="RefSeq" id="WP_003212509.1">
    <property type="nucleotide sequence ID" value="NZ_VEIS01000003.1"/>
</dbReference>
<dbReference type="SMR" id="A8FCU1"/>
<dbReference type="STRING" id="315750.BPUM_1375"/>
<dbReference type="KEGG" id="bpu:BPUM_1375"/>
<dbReference type="eggNOG" id="COG4838">
    <property type="taxonomic scope" value="Bacteria"/>
</dbReference>
<dbReference type="HOGENOM" id="CLU_160493_1_0_9"/>
<dbReference type="OrthoDB" id="2135235at2"/>
<dbReference type="Proteomes" id="UP000001355">
    <property type="component" value="Chromosome"/>
</dbReference>
<dbReference type="Gene3D" id="1.10.287.750">
    <property type="entry name" value="SO2669-like"/>
    <property type="match status" value="1"/>
</dbReference>
<dbReference type="HAMAP" id="MF_01560">
    <property type="entry name" value="UPF0358"/>
    <property type="match status" value="1"/>
</dbReference>
<dbReference type="InterPro" id="IPR009983">
    <property type="entry name" value="UPF0358"/>
</dbReference>
<dbReference type="InterPro" id="IPR036270">
    <property type="entry name" value="UPF0358_sf"/>
</dbReference>
<dbReference type="NCBIfam" id="NF010187">
    <property type="entry name" value="PRK13666.1"/>
    <property type="match status" value="1"/>
</dbReference>
<dbReference type="Pfam" id="PF07408">
    <property type="entry name" value="DUF1507"/>
    <property type="match status" value="1"/>
</dbReference>
<dbReference type="SUPFAM" id="SSF140404">
    <property type="entry name" value="EF2458-like"/>
    <property type="match status" value="1"/>
</dbReference>
<reference key="1">
    <citation type="journal article" date="2007" name="PLoS ONE">
        <title>Paradoxical DNA repair and peroxide resistance gene conservation in Bacillus pumilus SAFR-032.</title>
        <authorList>
            <person name="Gioia J."/>
            <person name="Yerrapragada S."/>
            <person name="Qin X."/>
            <person name="Jiang H."/>
            <person name="Igboeli O.C."/>
            <person name="Muzny D."/>
            <person name="Dugan-Rocha S."/>
            <person name="Ding Y."/>
            <person name="Hawes A."/>
            <person name="Liu W."/>
            <person name="Perez L."/>
            <person name="Kovar C."/>
            <person name="Dinh H."/>
            <person name="Lee S."/>
            <person name="Nazareth L."/>
            <person name="Blyth P."/>
            <person name="Holder M."/>
            <person name="Buhay C."/>
            <person name="Tirumalai M.R."/>
            <person name="Liu Y."/>
            <person name="Dasgupta I."/>
            <person name="Bokhetache L."/>
            <person name="Fujita M."/>
            <person name="Karouia F."/>
            <person name="Eswara Moorthy P."/>
            <person name="Siefert J."/>
            <person name="Uzman A."/>
            <person name="Buzumbo P."/>
            <person name="Verma A."/>
            <person name="Zwiya H."/>
            <person name="McWilliams B.D."/>
            <person name="Olowu A."/>
            <person name="Clinkenbeard K.D."/>
            <person name="Newcombe D."/>
            <person name="Golebiewski L."/>
            <person name="Petrosino J.F."/>
            <person name="Nicholson W.L."/>
            <person name="Fox G.E."/>
            <person name="Venkateswaran K."/>
            <person name="Highlander S.K."/>
            <person name="Weinstock G.M."/>
        </authorList>
    </citation>
    <scope>NUCLEOTIDE SEQUENCE [LARGE SCALE GENOMIC DNA]</scope>
    <source>
        <strain>SAFR-032</strain>
    </source>
</reference>
<feature type="chain" id="PRO_1000069001" description="UPF0358 protein BPUM_1375">
    <location>
        <begin position="1"/>
        <end position="93"/>
    </location>
</feature>
<protein>
    <recommendedName>
        <fullName evidence="1">UPF0358 protein BPUM_1375</fullName>
    </recommendedName>
</protein>
<gene>
    <name type="ordered locus">BPUM_1375</name>
</gene>
<comment type="similarity">
    <text evidence="1">Belongs to the UPF0358 family.</text>
</comment>